<name>GATB_METMP</name>
<protein>
    <recommendedName>
        <fullName evidence="1">Aspartyl/glutamyl-tRNA(Asn/Gln) amidotransferase subunit B</fullName>
        <shortName evidence="1">Asp/Glu-ADT subunit B</shortName>
        <ecNumber evidence="1">6.3.5.-</ecNumber>
    </recommendedName>
</protein>
<proteinExistence type="inferred from homology"/>
<gene>
    <name evidence="1" type="primary">gatB</name>
    <name type="ordered locus">MMP0946</name>
</gene>
<comment type="function">
    <text evidence="1">Allows the formation of correctly charged Asn-tRNA(Asn) or Gln-tRNA(Gln) through the transamidation of misacylated Asp-tRNA(Asn) or Glu-tRNA(Gln) in organisms which lack either or both of asparaginyl-tRNA or glutaminyl-tRNA synthetases. The reaction takes place in the presence of glutamine and ATP through an activated phospho-Asp-tRNA(Asn) or phospho-Glu-tRNA(Gln).</text>
</comment>
<comment type="catalytic activity">
    <reaction evidence="1">
        <text>L-glutamyl-tRNA(Gln) + L-glutamine + ATP + H2O = L-glutaminyl-tRNA(Gln) + L-glutamate + ADP + phosphate + H(+)</text>
        <dbReference type="Rhea" id="RHEA:17521"/>
        <dbReference type="Rhea" id="RHEA-COMP:9681"/>
        <dbReference type="Rhea" id="RHEA-COMP:9684"/>
        <dbReference type="ChEBI" id="CHEBI:15377"/>
        <dbReference type="ChEBI" id="CHEBI:15378"/>
        <dbReference type="ChEBI" id="CHEBI:29985"/>
        <dbReference type="ChEBI" id="CHEBI:30616"/>
        <dbReference type="ChEBI" id="CHEBI:43474"/>
        <dbReference type="ChEBI" id="CHEBI:58359"/>
        <dbReference type="ChEBI" id="CHEBI:78520"/>
        <dbReference type="ChEBI" id="CHEBI:78521"/>
        <dbReference type="ChEBI" id="CHEBI:456216"/>
    </reaction>
</comment>
<comment type="catalytic activity">
    <reaction evidence="1">
        <text>L-aspartyl-tRNA(Asn) + L-glutamine + ATP + H2O = L-asparaginyl-tRNA(Asn) + L-glutamate + ADP + phosphate + 2 H(+)</text>
        <dbReference type="Rhea" id="RHEA:14513"/>
        <dbReference type="Rhea" id="RHEA-COMP:9674"/>
        <dbReference type="Rhea" id="RHEA-COMP:9677"/>
        <dbReference type="ChEBI" id="CHEBI:15377"/>
        <dbReference type="ChEBI" id="CHEBI:15378"/>
        <dbReference type="ChEBI" id="CHEBI:29985"/>
        <dbReference type="ChEBI" id="CHEBI:30616"/>
        <dbReference type="ChEBI" id="CHEBI:43474"/>
        <dbReference type="ChEBI" id="CHEBI:58359"/>
        <dbReference type="ChEBI" id="CHEBI:78515"/>
        <dbReference type="ChEBI" id="CHEBI:78516"/>
        <dbReference type="ChEBI" id="CHEBI:456216"/>
    </reaction>
</comment>
<comment type="subunit">
    <text evidence="1">Heterotrimer of A, B and C subunits.</text>
</comment>
<comment type="similarity">
    <text evidence="1">Belongs to the GatB/GatE family. GatB subfamily.</text>
</comment>
<reference key="1">
    <citation type="journal article" date="2004" name="J. Bacteriol.">
        <title>Complete genome sequence of the genetically tractable hydrogenotrophic methanogen Methanococcus maripaludis.</title>
        <authorList>
            <person name="Hendrickson E.L."/>
            <person name="Kaul R."/>
            <person name="Zhou Y."/>
            <person name="Bovee D."/>
            <person name="Chapman P."/>
            <person name="Chung J."/>
            <person name="Conway de Macario E."/>
            <person name="Dodsworth J.A."/>
            <person name="Gillett W."/>
            <person name="Graham D.E."/>
            <person name="Hackett M."/>
            <person name="Haydock A.K."/>
            <person name="Kang A."/>
            <person name="Land M.L."/>
            <person name="Levy R."/>
            <person name="Lie T.J."/>
            <person name="Major T.A."/>
            <person name="Moore B.C."/>
            <person name="Porat I."/>
            <person name="Palmeiri A."/>
            <person name="Rouse G."/>
            <person name="Saenphimmachak C."/>
            <person name="Soell D."/>
            <person name="Van Dien S."/>
            <person name="Wang T."/>
            <person name="Whitman W.B."/>
            <person name="Xia Q."/>
            <person name="Zhang Y."/>
            <person name="Larimer F.W."/>
            <person name="Olson M.V."/>
            <person name="Leigh J.A."/>
        </authorList>
    </citation>
    <scope>NUCLEOTIDE SEQUENCE [LARGE SCALE GENOMIC DNA]</scope>
    <source>
        <strain>DSM 14266 / JCM 13030 / NBRC 101832 / S2 / LL</strain>
    </source>
</reference>
<feature type="chain" id="PRO_0000148874" description="Aspartyl/glutamyl-tRNA(Asn/Gln) amidotransferase subunit B">
    <location>
        <begin position="1"/>
        <end position="469"/>
    </location>
</feature>
<organism>
    <name type="scientific">Methanococcus maripaludis (strain DSM 14266 / JCM 13030 / NBRC 101832 / S2 / LL)</name>
    <dbReference type="NCBI Taxonomy" id="267377"/>
    <lineage>
        <taxon>Archaea</taxon>
        <taxon>Methanobacteriati</taxon>
        <taxon>Methanobacteriota</taxon>
        <taxon>Methanomada group</taxon>
        <taxon>Methanococci</taxon>
        <taxon>Methanococcales</taxon>
        <taxon>Methanococcaceae</taxon>
        <taxon>Methanococcus</taxon>
    </lineage>
</organism>
<keyword id="KW-0067">ATP-binding</keyword>
<keyword id="KW-0436">Ligase</keyword>
<keyword id="KW-0547">Nucleotide-binding</keyword>
<keyword id="KW-0648">Protein biosynthesis</keyword>
<keyword id="KW-1185">Reference proteome</keyword>
<accession>P61350</accession>
<dbReference type="EC" id="6.3.5.-" evidence="1"/>
<dbReference type="EMBL" id="BX950229">
    <property type="protein sequence ID" value="CAF30502.1"/>
    <property type="molecule type" value="Genomic_DNA"/>
</dbReference>
<dbReference type="RefSeq" id="WP_011170890.1">
    <property type="nucleotide sequence ID" value="NC_005791.1"/>
</dbReference>
<dbReference type="SMR" id="P61350"/>
<dbReference type="STRING" id="267377.MMP0946"/>
<dbReference type="EnsemblBacteria" id="CAF30502">
    <property type="protein sequence ID" value="CAF30502"/>
    <property type="gene ID" value="MMP0946"/>
</dbReference>
<dbReference type="GeneID" id="2761529"/>
<dbReference type="KEGG" id="mmp:MMP0946"/>
<dbReference type="PATRIC" id="fig|267377.15.peg.974"/>
<dbReference type="eggNOG" id="arCOG01718">
    <property type="taxonomic scope" value="Archaea"/>
</dbReference>
<dbReference type="HOGENOM" id="CLU_019240_0_0_2"/>
<dbReference type="OrthoDB" id="52755at2157"/>
<dbReference type="Proteomes" id="UP000000590">
    <property type="component" value="Chromosome"/>
</dbReference>
<dbReference type="GO" id="GO:0050566">
    <property type="term" value="F:asparaginyl-tRNA synthase (glutamine-hydrolyzing) activity"/>
    <property type="evidence" value="ECO:0007669"/>
    <property type="project" value="RHEA"/>
</dbReference>
<dbReference type="GO" id="GO:0005524">
    <property type="term" value="F:ATP binding"/>
    <property type="evidence" value="ECO:0007669"/>
    <property type="project" value="UniProtKB-KW"/>
</dbReference>
<dbReference type="GO" id="GO:0050567">
    <property type="term" value="F:glutaminyl-tRNA synthase (glutamine-hydrolyzing) activity"/>
    <property type="evidence" value="ECO:0007669"/>
    <property type="project" value="UniProtKB-UniRule"/>
</dbReference>
<dbReference type="GO" id="GO:0070681">
    <property type="term" value="P:glutaminyl-tRNAGln biosynthesis via transamidation"/>
    <property type="evidence" value="ECO:0007669"/>
    <property type="project" value="TreeGrafter"/>
</dbReference>
<dbReference type="GO" id="GO:0006412">
    <property type="term" value="P:translation"/>
    <property type="evidence" value="ECO:0007669"/>
    <property type="project" value="UniProtKB-UniRule"/>
</dbReference>
<dbReference type="FunFam" id="1.10.10.410:FF:000001">
    <property type="entry name" value="Aspartyl/glutamyl-tRNA(Asn/Gln) amidotransferase subunit B"/>
    <property type="match status" value="1"/>
</dbReference>
<dbReference type="Gene3D" id="1.10.10.410">
    <property type="match status" value="1"/>
</dbReference>
<dbReference type="Gene3D" id="1.10.150.380">
    <property type="entry name" value="GatB domain, N-terminal subdomain"/>
    <property type="match status" value="1"/>
</dbReference>
<dbReference type="HAMAP" id="MF_00121">
    <property type="entry name" value="GatB"/>
    <property type="match status" value="1"/>
</dbReference>
<dbReference type="InterPro" id="IPR017959">
    <property type="entry name" value="Asn/Gln-tRNA_amidoTrfase_suB/E"/>
</dbReference>
<dbReference type="InterPro" id="IPR006075">
    <property type="entry name" value="Asn/Gln-tRNA_Trfase_suB/E_cat"/>
</dbReference>
<dbReference type="InterPro" id="IPR018027">
    <property type="entry name" value="Asn/Gln_amidotransferase"/>
</dbReference>
<dbReference type="InterPro" id="IPR003789">
    <property type="entry name" value="Asn/Gln_tRNA_amidoTrase-B-like"/>
</dbReference>
<dbReference type="InterPro" id="IPR004413">
    <property type="entry name" value="GatB"/>
</dbReference>
<dbReference type="InterPro" id="IPR042114">
    <property type="entry name" value="GatB_C_1"/>
</dbReference>
<dbReference type="InterPro" id="IPR023168">
    <property type="entry name" value="GatB_Yqey_C_2"/>
</dbReference>
<dbReference type="InterPro" id="IPR017958">
    <property type="entry name" value="Gln-tRNA_amidoTrfase_suB_CS"/>
</dbReference>
<dbReference type="InterPro" id="IPR014746">
    <property type="entry name" value="Gln_synth/guanido_kin_cat_dom"/>
</dbReference>
<dbReference type="NCBIfam" id="TIGR00133">
    <property type="entry name" value="gatB"/>
    <property type="match status" value="1"/>
</dbReference>
<dbReference type="NCBIfam" id="NF004012">
    <property type="entry name" value="PRK05477.1-2"/>
    <property type="match status" value="1"/>
</dbReference>
<dbReference type="NCBIfam" id="NF004014">
    <property type="entry name" value="PRK05477.1-4"/>
    <property type="match status" value="1"/>
</dbReference>
<dbReference type="PANTHER" id="PTHR11659">
    <property type="entry name" value="GLUTAMYL-TRNA GLN AMIDOTRANSFERASE SUBUNIT B MITOCHONDRIAL AND PROKARYOTIC PET112-RELATED"/>
    <property type="match status" value="1"/>
</dbReference>
<dbReference type="PANTHER" id="PTHR11659:SF0">
    <property type="entry name" value="GLUTAMYL-TRNA(GLN) AMIDOTRANSFERASE SUBUNIT B, MITOCHONDRIAL"/>
    <property type="match status" value="1"/>
</dbReference>
<dbReference type="Pfam" id="PF02934">
    <property type="entry name" value="GatB_N"/>
    <property type="match status" value="1"/>
</dbReference>
<dbReference type="Pfam" id="PF02637">
    <property type="entry name" value="GatB_Yqey"/>
    <property type="match status" value="1"/>
</dbReference>
<dbReference type="SMART" id="SM00845">
    <property type="entry name" value="GatB_Yqey"/>
    <property type="match status" value="1"/>
</dbReference>
<dbReference type="SUPFAM" id="SSF89095">
    <property type="entry name" value="GatB/YqeY motif"/>
    <property type="match status" value="1"/>
</dbReference>
<dbReference type="SUPFAM" id="SSF55931">
    <property type="entry name" value="Glutamine synthetase/guanido kinase"/>
    <property type="match status" value="1"/>
</dbReference>
<dbReference type="PROSITE" id="PS01234">
    <property type="entry name" value="GATB"/>
    <property type="match status" value="1"/>
</dbReference>
<evidence type="ECO:0000255" key="1">
    <source>
        <dbReference type="HAMAP-Rule" id="MF_00121"/>
    </source>
</evidence>
<sequence>MSEDLSMKCGLEIHVQVDTNSKLFCQCPTNYKDVEPNTNICPVCIGHPGAKPMPPNKKAIDVAIMVAKMLDCEMVIDKDIYFQRKHYNYPDLPSGYQKTSVPIGEHGTFLGVGITEVHLEEDPGQYKPDLGTVDYNRSGTPLIEIVTDPDMKSPEEAREFLRQLMRLFRYIGHLRGEGTMRADTNISIKYNGIQGNRVEVKNVNSIRGVYKVLKYELIRQKNVLRRGGEIKMETRAFMESQMITKGMRSKETADDYRYIPDPDLQPIVLNNNWVEKVEAQMPETPMNKEKRFVEQYGIKEDDAKVLVSDLELADVFEKVVAELGNDKNGISLAVTWIRNELKRVLVYNKIEFFETNLKPEHMVELINSIKDKTISQKIGKTIIEQMVEHKGEKTPKELITEMGLTVIEDTSELEKACEEAIKNSEKAVEDYKSGNQRALNSVVGQVMKLTRGRAEPGTVVKILKKKIDG</sequence>